<reference key="1">
    <citation type="journal article" date="1997" name="Nature">
        <title>The nucleotide sequence of Saccharomyces cerevisiae chromosome VII.</title>
        <authorList>
            <person name="Tettelin H."/>
            <person name="Agostoni-Carbone M.L."/>
            <person name="Albermann K."/>
            <person name="Albers M."/>
            <person name="Arroyo J."/>
            <person name="Backes U."/>
            <person name="Barreiros T."/>
            <person name="Bertani I."/>
            <person name="Bjourson A.J."/>
            <person name="Brueckner M."/>
            <person name="Bruschi C.V."/>
            <person name="Carignani G."/>
            <person name="Castagnoli L."/>
            <person name="Cerdan E."/>
            <person name="Clemente M.L."/>
            <person name="Coblenz A."/>
            <person name="Coglievina M."/>
            <person name="Coissac E."/>
            <person name="Defoor E."/>
            <person name="Del Bino S."/>
            <person name="Delius H."/>
            <person name="Delneri D."/>
            <person name="de Wergifosse P."/>
            <person name="Dujon B."/>
            <person name="Durand P."/>
            <person name="Entian K.-D."/>
            <person name="Eraso P."/>
            <person name="Escribano V."/>
            <person name="Fabiani L."/>
            <person name="Fartmann B."/>
            <person name="Feroli F."/>
            <person name="Feuermann M."/>
            <person name="Frontali L."/>
            <person name="Garcia-Gonzalez M."/>
            <person name="Garcia-Saez M.I."/>
            <person name="Goffeau A."/>
            <person name="Guerreiro P."/>
            <person name="Hani J."/>
            <person name="Hansen M."/>
            <person name="Hebling U."/>
            <person name="Hernandez K."/>
            <person name="Heumann K."/>
            <person name="Hilger F."/>
            <person name="Hofmann B."/>
            <person name="Indge K.J."/>
            <person name="James C.M."/>
            <person name="Klima R."/>
            <person name="Koetter P."/>
            <person name="Kramer B."/>
            <person name="Kramer W."/>
            <person name="Lauquin G."/>
            <person name="Leuther H."/>
            <person name="Louis E.J."/>
            <person name="Maillier E."/>
            <person name="Marconi A."/>
            <person name="Martegani E."/>
            <person name="Mazon M.J."/>
            <person name="Mazzoni C."/>
            <person name="McReynolds A.D.K."/>
            <person name="Melchioretto P."/>
            <person name="Mewes H.-W."/>
            <person name="Minenkova O."/>
            <person name="Mueller-Auer S."/>
            <person name="Nawrocki A."/>
            <person name="Netter P."/>
            <person name="Neu R."/>
            <person name="Nombela C."/>
            <person name="Oliver S.G."/>
            <person name="Panzeri L."/>
            <person name="Paoluzi S."/>
            <person name="Plevani P."/>
            <person name="Portetelle D."/>
            <person name="Portillo F."/>
            <person name="Potier S."/>
            <person name="Purnelle B."/>
            <person name="Rieger M."/>
            <person name="Riles L."/>
            <person name="Rinaldi T."/>
            <person name="Robben J."/>
            <person name="Rodrigues-Pousada C."/>
            <person name="Rodriguez-Belmonte E."/>
            <person name="Rodriguez-Torres A.M."/>
            <person name="Rose M."/>
            <person name="Ruzzi M."/>
            <person name="Saliola M."/>
            <person name="Sanchez-Perez M."/>
            <person name="Schaefer B."/>
            <person name="Schaefer M."/>
            <person name="Scharfe M."/>
            <person name="Schmidheini T."/>
            <person name="Schreer A."/>
            <person name="Skala J."/>
            <person name="Souciet J.-L."/>
            <person name="Steensma H.Y."/>
            <person name="Talla E."/>
            <person name="Thierry A."/>
            <person name="Vandenbol M."/>
            <person name="van der Aart Q.J.M."/>
            <person name="Van Dyck L."/>
            <person name="Vanoni M."/>
            <person name="Verhasselt P."/>
            <person name="Voet M."/>
            <person name="Volckaert G."/>
            <person name="Wambutt R."/>
            <person name="Watson M.D."/>
            <person name="Weber N."/>
            <person name="Wedler E."/>
            <person name="Wedler H."/>
            <person name="Wipfli P."/>
            <person name="Wolf K."/>
            <person name="Wright L.F."/>
            <person name="Zaccaria P."/>
            <person name="Zimmermann M."/>
            <person name="Zollner A."/>
            <person name="Kleine K."/>
        </authorList>
    </citation>
    <scope>NUCLEOTIDE SEQUENCE [LARGE SCALE GENOMIC DNA]</scope>
    <source>
        <strain>ATCC 204508 / S288c</strain>
    </source>
</reference>
<reference key="2">
    <citation type="journal article" date="2014" name="G3 (Bethesda)">
        <title>The reference genome sequence of Saccharomyces cerevisiae: Then and now.</title>
        <authorList>
            <person name="Engel S.R."/>
            <person name="Dietrich F.S."/>
            <person name="Fisk D.G."/>
            <person name="Binkley G."/>
            <person name="Balakrishnan R."/>
            <person name="Costanzo M.C."/>
            <person name="Dwight S.S."/>
            <person name="Hitz B.C."/>
            <person name="Karra K."/>
            <person name="Nash R.S."/>
            <person name="Weng S."/>
            <person name="Wong E.D."/>
            <person name="Lloyd P."/>
            <person name="Skrzypek M.S."/>
            <person name="Miyasato S.R."/>
            <person name="Simison M."/>
            <person name="Cherry J.M."/>
        </authorList>
    </citation>
    <scope>GENOME REANNOTATION</scope>
    <source>
        <strain>ATCC 204508 / S288c</strain>
    </source>
</reference>
<reference key="3">
    <citation type="journal article" date="2007" name="Genome Res.">
        <title>Approaching a complete repository of sequence-verified protein-encoding clones for Saccharomyces cerevisiae.</title>
        <authorList>
            <person name="Hu Y."/>
            <person name="Rolfs A."/>
            <person name="Bhullar B."/>
            <person name="Murthy T.V.S."/>
            <person name="Zhu C."/>
            <person name="Berger M.F."/>
            <person name="Camargo A.A."/>
            <person name="Kelley F."/>
            <person name="McCarron S."/>
            <person name="Jepson D."/>
            <person name="Richardson A."/>
            <person name="Raphael J."/>
            <person name="Moreira D."/>
            <person name="Taycher E."/>
            <person name="Zuo D."/>
            <person name="Mohr S."/>
            <person name="Kane M.F."/>
            <person name="Williamson J."/>
            <person name="Simpson A.J.G."/>
            <person name="Bulyk M.L."/>
            <person name="Harlow E."/>
            <person name="Marsischky G."/>
            <person name="Kolodner R.D."/>
            <person name="LaBaer J."/>
        </authorList>
    </citation>
    <scope>NUCLEOTIDE SEQUENCE [GENOMIC DNA]</scope>
    <source>
        <strain>ATCC 204508 / S288c</strain>
    </source>
</reference>
<reference key="4">
    <citation type="journal article" date="2001" name="Proc. Natl. Acad. Sci. U.S.A.">
        <title>Jac1, a mitochondrial J-type chaperone, is involved in the biogenesis of Fe/S clusters in Saccharomyces cerevisiae.</title>
        <authorList>
            <person name="Voisine C."/>
            <person name="Cheng Y.C."/>
            <person name="Ohlson M."/>
            <person name="Schilke B."/>
            <person name="Hoff K."/>
            <person name="Beinert H."/>
            <person name="Marszalek J."/>
            <person name="Craig E.A."/>
        </authorList>
    </citation>
    <scope>PROTEIN SEQUENCE OF 11-17</scope>
    <scope>FUNCTION</scope>
    <scope>SUBCELLULAR LOCATION</scope>
    <scope>MUTAGENESIS OF 48-HIS--ASP-50</scope>
</reference>
<reference key="5">
    <citation type="journal article" date="1998" name="J. Biol. Chem.">
        <title>Suppressors of superoxide dismutase (SOD1) deficiency in Saccharomyces cerevisiae. Identification of proteins predicted to mediate iron-sulfur cluster assembly.</title>
        <authorList>
            <person name="Strain J."/>
            <person name="Lorenz C.R."/>
            <person name="Bode J."/>
            <person name="Garland S."/>
            <person name="Smolen G.A."/>
            <person name="Ta D.T."/>
            <person name="Vickery L.E."/>
            <person name="Culotta V.C."/>
        </authorList>
    </citation>
    <scope>FUNCTION</scope>
    <scope>MUTAGENESIS OF ASP-32</scope>
</reference>
<reference key="6">
    <citation type="journal article" date="2001" name="J. Biol. Chem.">
        <title>J-domain protein, Jac1p, of yeast mitochondria required for iron homeostasis and activity of Fe-S cluster proteins.</title>
        <authorList>
            <person name="Kim R."/>
            <person name="Saxena S."/>
            <person name="Gordon D.M."/>
            <person name="Pain D."/>
            <person name="Dancis A."/>
        </authorList>
    </citation>
    <scope>FUNCTION</scope>
    <scope>SUBCELLULAR LOCATION</scope>
</reference>
<reference key="7">
    <citation type="journal article" date="2001" name="J. Mol. Biol.">
        <title>The mitochondrial proteins Ssq1 and Jac1 are required for the assembly of iron sulfur clusters in mitochondria.</title>
        <authorList>
            <person name="Lutz T."/>
            <person name="Westermann B."/>
            <person name="Neupert W."/>
            <person name="Herrmann J.M."/>
        </authorList>
    </citation>
    <scope>FUNCTION</scope>
    <scope>SUBCELLULAR LOCATION</scope>
</reference>
<reference key="8">
    <citation type="journal article" date="2003" name="EMBO J.">
        <title>Components involved in assembly and dislocation of iron-sulfur clusters on the scaffold protein Isu1p.</title>
        <authorList>
            <person name="Muehlenhoff U."/>
            <person name="Gerber J."/>
            <person name="Richhardt N."/>
            <person name="Lill R."/>
        </authorList>
    </citation>
    <scope>FUNCTION</scope>
</reference>
<reference key="9">
    <citation type="journal article" date="2003" name="J. Biol. Chem.">
        <title>Ssq1, a mitochondrial Hsp70 involved in iron-sulfur (Fe/S) center biogenesis. Similarities to and differences from its bacterial counterpart.</title>
        <authorList>
            <person name="Dutkiewicz R."/>
            <person name="Schilke B."/>
            <person name="Knieszner H."/>
            <person name="Walter W."/>
            <person name="Craig E.A."/>
            <person name="Marszalek J."/>
        </authorList>
    </citation>
    <scope>FUNCTION</scope>
    <scope>INTERACTION WITH ISU1</scope>
</reference>
<reference key="10">
    <citation type="journal article" date="2003" name="Nature">
        <title>Global analysis of protein localization in budding yeast.</title>
        <authorList>
            <person name="Huh W.-K."/>
            <person name="Falvo J.V."/>
            <person name="Gerke L.C."/>
            <person name="Carroll A.S."/>
            <person name="Howson R.W."/>
            <person name="Weissman J.S."/>
            <person name="O'Shea E.K."/>
        </authorList>
    </citation>
    <scope>SUBCELLULAR LOCATION [LARGE SCALE ANALYSIS]</scope>
</reference>
<reference key="11">
    <citation type="journal article" date="2003" name="Nature">
        <title>Global analysis of protein expression in yeast.</title>
        <authorList>
            <person name="Ghaemmaghami S."/>
            <person name="Huh W.-K."/>
            <person name="Bower K."/>
            <person name="Howson R.W."/>
            <person name="Belle A."/>
            <person name="Dephoure N."/>
            <person name="O'Shea E.K."/>
            <person name="Weissman J.S."/>
        </authorList>
    </citation>
    <scope>LEVEL OF PROTEIN EXPRESSION [LARGE SCALE ANALYSIS]</scope>
</reference>
<reference key="12">
    <citation type="journal article" date="2003" name="Proc. Natl. Acad. Sci. U.S.A.">
        <title>The proteome of Saccharomyces cerevisiae mitochondria.</title>
        <authorList>
            <person name="Sickmann A."/>
            <person name="Reinders J."/>
            <person name="Wagner Y."/>
            <person name="Joppich C."/>
            <person name="Zahedi R.P."/>
            <person name="Meyer H.E."/>
            <person name="Schoenfisch B."/>
            <person name="Perschil I."/>
            <person name="Chacinska A."/>
            <person name="Guiard B."/>
            <person name="Rehling P."/>
            <person name="Pfanner N."/>
            <person name="Meisinger C."/>
        </authorList>
    </citation>
    <scope>SUBCELLULAR LOCATION [LARGE SCALE ANALYSIS]</scope>
    <source>
        <strain>ATCC 76625 / YPH499</strain>
    </source>
</reference>
<reference key="13">
    <citation type="journal article" date="2004" name="J. Biol. Chem.">
        <title>Sequence-specific interaction between mitochondrial Fe-S scaffold protein Isu and Hsp70 Ssq1 is essential for their in vivo function.</title>
        <authorList>
            <person name="Dutkiewicz R."/>
            <person name="Schilke B."/>
            <person name="Cheng S."/>
            <person name="Knieszner H."/>
            <person name="Craig E.A."/>
            <person name="Marszalek J."/>
        </authorList>
    </citation>
    <scope>FUNCTION</scope>
    <scope>INTERACTION WITH ISU1</scope>
</reference>
<reference key="14">
    <citation type="journal article" date="2006" name="J. Biol. Chem.">
        <title>The Hsp70 chaperone Ssq1p is dispensable for iron-sulfur cluster formation on the scaffold protein Isu1p.</title>
        <authorList>
            <person name="Dutkiewicz R."/>
            <person name="Marszalek J."/>
            <person name="Schilke B."/>
            <person name="Craig E.A."/>
            <person name="Lill R."/>
            <person name="Muehlenhoff U."/>
        </authorList>
    </citation>
    <scope>FUNCTION</scope>
</reference>
<reference key="15">
    <citation type="journal article" date="2006" name="J. Biol. Chem.">
        <title>Characterization of the interaction between the J-protein Jac1p and the scaffold for Fe-S cluster biogenesis, Isu1p.</title>
        <authorList>
            <person name="Andrew A.J."/>
            <person name="Dutkiewicz R."/>
            <person name="Knieszner H."/>
            <person name="Craig E.A."/>
            <person name="Marszalek J."/>
        </authorList>
    </citation>
    <scope>FUNCTION</scope>
    <scope>INTERACTION WITH ISU1</scope>
    <scope>MUTAGENESIS OF 104-LEU--GLN-117</scope>
</reference>
<reference key="16">
    <citation type="journal article" date="2013" name="Mol. Biol. Cell">
        <title>The mitochondrial Hsp70 chaperone Ssq1 facilitates Fe/S cluster transfer from Isu1 to Grx5 by complex formation.</title>
        <authorList>
            <person name="Uzarska M.A."/>
            <person name="Dutkiewicz R."/>
            <person name="Freibert S.A."/>
            <person name="Lill R."/>
            <person name="Muehlenhoff U."/>
        </authorList>
    </citation>
    <scope>FUNCTION</scope>
    <scope>INTERACTION WITH SSQ1</scope>
    <scope>DISRUPTION PHENOTYPE</scope>
</reference>
<reference key="17">
    <citation type="journal article" date="2016" name="Mol. Biol. Evol.">
        <title>Iron-Sulfur Cluster Biogenesis Chaperones: Evidence for Emergence of Mutational Robustness of a Highly Specific Protein-Protein Interaction.</title>
        <authorList>
            <person name="Delewski W."/>
            <person name="Paterkiewicz B."/>
            <person name="Manicki M."/>
            <person name="Schilke B."/>
            <person name="Tomiczek B."/>
            <person name="Ciesielski S.J."/>
            <person name="Nierzwicki L."/>
            <person name="Czub J."/>
            <person name="Dutkiewicz R."/>
            <person name="Craig E.A."/>
            <person name="Marszalek J."/>
        </authorList>
    </citation>
    <scope>FUNCTION</scope>
    <scope>INTERACTION WITH SSQ1</scope>
    <scope>DISRUPTION PHENOTYPE</scope>
    <scope>MUTAGENESIS OF LYS-20; ARG-35; LYS-38; ARG-41; HIS-48; PRO-49 AND ASP-50</scope>
</reference>
<gene>
    <name evidence="16 18" type="primary">JAC1</name>
    <name type="synonym">SEO2</name>
    <name type="ordered locus">YGL018C</name>
</gene>
<organism>
    <name type="scientific">Saccharomyces cerevisiae (strain ATCC 204508 / S288c)</name>
    <name type="common">Baker's yeast</name>
    <dbReference type="NCBI Taxonomy" id="559292"/>
    <lineage>
        <taxon>Eukaryota</taxon>
        <taxon>Fungi</taxon>
        <taxon>Dikarya</taxon>
        <taxon>Ascomycota</taxon>
        <taxon>Saccharomycotina</taxon>
        <taxon>Saccharomycetes</taxon>
        <taxon>Saccharomycetales</taxon>
        <taxon>Saccharomycetaceae</taxon>
        <taxon>Saccharomyces</taxon>
    </lineage>
</organism>
<accession>P53193</accession>
<accession>D6VUB9</accession>
<proteinExistence type="evidence at protein level"/>
<keyword id="KW-0002">3D-structure</keyword>
<keyword id="KW-0143">Chaperone</keyword>
<keyword id="KW-0903">Direct protein sequencing</keyword>
<keyword id="KW-0496">Mitochondrion</keyword>
<keyword id="KW-1185">Reference proteome</keyword>
<keyword id="KW-0346">Stress response</keyword>
<keyword id="KW-0809">Transit peptide</keyword>
<comment type="function">
    <text evidence="2 3 4 5 6 10 11 12 13 14 15">Co-chaperone required for the assembly of iron-sulfur (Fe/S) clusters in mitochondria. Stimulates the ATPase activity of its specialized Hsp70 chaperone partner SSQ1, to mediate the transfer of iron-sulfur clusters from ISU1 to GRX5. Binds to the substrate protein ISU1 and targets it to SSQ1.</text>
</comment>
<comment type="subunit">
    <text evidence="5 10 12 13 14">Interacts with ISU1 and SSQ1.</text>
</comment>
<comment type="interaction">
    <interactant intactId="EBI-23714">
        <id>P53193</id>
    </interactant>
    <interactant intactId="EBI-29901">
        <id>Q03020</id>
        <label>ISU1</label>
    </interactant>
    <organismsDiffer>false</organismsDiffer>
    <experiments>3</experiments>
</comment>
<comment type="subcellular location">
    <subcellularLocation>
        <location evidence="2 3 4 7 9">Mitochondrion matrix</location>
    </subcellularLocation>
</comment>
<comment type="disruption phenotype">
    <text evidence="13 14">Increases association between GRX5 and SSQ1 (PubMed:23615440). Inviable vegetative cell population growth (PubMed:26545917).</text>
</comment>
<comment type="miscellaneous">
    <text evidence="8">Present with 2010 molecules/cell in log phase SD medium.</text>
</comment>
<comment type="similarity">
    <text evidence="17">Belongs to the HscB family.</text>
</comment>
<sequence>MLKYLVQRRFTSTFYELFPKTFPKKLPIWTIDQSRLRKEYRQLQAQHHPDMAQQGSEQSSTLNQAYHTLKDPLRRSQYMLKLLRNIDLTQEQTSNEVTTSDPQLLLKVLDIHDELSQMDDEAGVKLLEKQNKERIQDIEAQLGQCYNDKDYAAAVKLTVELKYWYNLAKAFKDWAPGKQLEMNH</sequence>
<dbReference type="EMBL" id="Z72540">
    <property type="protein sequence ID" value="CAA96718.1"/>
    <property type="molecule type" value="Genomic_DNA"/>
</dbReference>
<dbReference type="EMBL" id="AY558479">
    <property type="protein sequence ID" value="AAS56805.1"/>
    <property type="molecule type" value="Genomic_DNA"/>
</dbReference>
<dbReference type="EMBL" id="BK006941">
    <property type="protein sequence ID" value="DAA08080.1"/>
    <property type="molecule type" value="Genomic_DNA"/>
</dbReference>
<dbReference type="PIR" id="S64020">
    <property type="entry name" value="S64020"/>
</dbReference>
<dbReference type="RefSeq" id="NP_011497.1">
    <property type="nucleotide sequence ID" value="NM_001180883.1"/>
</dbReference>
<dbReference type="PDB" id="3UO2">
    <property type="method" value="X-ray"/>
    <property type="resolution" value="2.13 A"/>
    <property type="chains" value="A/B=10-184"/>
</dbReference>
<dbReference type="PDB" id="3UO3">
    <property type="method" value="X-ray"/>
    <property type="resolution" value="1.85 A"/>
    <property type="chains" value="A/B=5-182"/>
</dbReference>
<dbReference type="PDBsum" id="3UO2"/>
<dbReference type="PDBsum" id="3UO3"/>
<dbReference type="SMR" id="P53193"/>
<dbReference type="BioGRID" id="33228">
    <property type="interactions" value="50"/>
</dbReference>
<dbReference type="DIP" id="DIP-5603N"/>
<dbReference type="FunCoup" id="P53193">
    <property type="interactions" value="446"/>
</dbReference>
<dbReference type="IntAct" id="P53193">
    <property type="interactions" value="1"/>
</dbReference>
<dbReference type="STRING" id="4932.YGL018C"/>
<dbReference type="PaxDb" id="4932-YGL018C"/>
<dbReference type="PeptideAtlas" id="P53193"/>
<dbReference type="EnsemblFungi" id="YGL018C_mRNA">
    <property type="protein sequence ID" value="YGL018C"/>
    <property type="gene ID" value="YGL018C"/>
</dbReference>
<dbReference type="GeneID" id="852866"/>
<dbReference type="KEGG" id="sce:YGL018C"/>
<dbReference type="AGR" id="SGD:S000002986"/>
<dbReference type="SGD" id="S000002986">
    <property type="gene designation" value="JAC1"/>
</dbReference>
<dbReference type="VEuPathDB" id="FungiDB:YGL018C"/>
<dbReference type="eggNOG" id="KOG3192">
    <property type="taxonomic scope" value="Eukaryota"/>
</dbReference>
<dbReference type="GeneTree" id="ENSGT00390000008206"/>
<dbReference type="HOGENOM" id="CLU_068529_1_1_1"/>
<dbReference type="InParanoid" id="P53193"/>
<dbReference type="OMA" id="TVELKYW"/>
<dbReference type="OrthoDB" id="448954at2759"/>
<dbReference type="BioCyc" id="MetaCyc:G3O-30538-MONOMER"/>
<dbReference type="BioCyc" id="YEAST:G3O-30538-MONOMER"/>
<dbReference type="Reactome" id="R-SCE-1268020">
    <property type="pathway name" value="Mitochondrial protein import"/>
</dbReference>
<dbReference type="Reactome" id="R-SCE-1362409">
    <property type="pathway name" value="Mitochondrial iron-sulfur cluster biogenesis"/>
</dbReference>
<dbReference type="Reactome" id="R-SCE-9865881">
    <property type="pathway name" value="Complex III assembly"/>
</dbReference>
<dbReference type="BioGRID-ORCS" id="852866">
    <property type="hits" value="4 hits in 10 CRISPR screens"/>
</dbReference>
<dbReference type="EvolutionaryTrace" id="P53193"/>
<dbReference type="PRO" id="PR:P53193"/>
<dbReference type="Proteomes" id="UP000002311">
    <property type="component" value="Chromosome VII"/>
</dbReference>
<dbReference type="RNAct" id="P53193">
    <property type="molecule type" value="protein"/>
</dbReference>
<dbReference type="GO" id="GO:0005743">
    <property type="term" value="C:mitochondrial inner membrane"/>
    <property type="evidence" value="ECO:0000304"/>
    <property type="project" value="Reactome"/>
</dbReference>
<dbReference type="GO" id="GO:0005758">
    <property type="term" value="C:mitochondrial intermembrane space"/>
    <property type="evidence" value="ECO:0000304"/>
    <property type="project" value="Reactome"/>
</dbReference>
<dbReference type="GO" id="GO:0005759">
    <property type="term" value="C:mitochondrial matrix"/>
    <property type="evidence" value="ECO:0000314"/>
    <property type="project" value="SGD"/>
</dbReference>
<dbReference type="GO" id="GO:0005739">
    <property type="term" value="C:mitochondrion"/>
    <property type="evidence" value="ECO:0000314"/>
    <property type="project" value="SGD"/>
</dbReference>
<dbReference type="GO" id="GO:0001671">
    <property type="term" value="F:ATPase activator activity"/>
    <property type="evidence" value="ECO:0000314"/>
    <property type="project" value="SGD"/>
</dbReference>
<dbReference type="GO" id="GO:0051087">
    <property type="term" value="F:protein-folding chaperone binding"/>
    <property type="evidence" value="ECO:0000315"/>
    <property type="project" value="SGD"/>
</dbReference>
<dbReference type="GO" id="GO:0044571">
    <property type="term" value="P:[2Fe-2S] cluster assembly"/>
    <property type="evidence" value="ECO:0000315"/>
    <property type="project" value="SGD"/>
</dbReference>
<dbReference type="GO" id="GO:0044572">
    <property type="term" value="P:[4Fe-4S] cluster assembly"/>
    <property type="evidence" value="ECO:0000315"/>
    <property type="project" value="SGD"/>
</dbReference>
<dbReference type="GO" id="GO:0009060">
    <property type="term" value="P:aerobic respiration"/>
    <property type="evidence" value="ECO:0000315"/>
    <property type="project" value="SGD"/>
</dbReference>
<dbReference type="GO" id="GO:0006879">
    <property type="term" value="P:intracellular iron ion homeostasis"/>
    <property type="evidence" value="ECO:0000315"/>
    <property type="project" value="SGD"/>
</dbReference>
<dbReference type="GO" id="GO:0016226">
    <property type="term" value="P:iron-sulfur cluster assembly"/>
    <property type="evidence" value="ECO:0000315"/>
    <property type="project" value="SGD"/>
</dbReference>
<dbReference type="GO" id="GO:0051259">
    <property type="term" value="P:protein complex oligomerization"/>
    <property type="evidence" value="ECO:0007669"/>
    <property type="project" value="InterPro"/>
</dbReference>
<dbReference type="CDD" id="cd06257">
    <property type="entry name" value="DnaJ"/>
    <property type="match status" value="1"/>
</dbReference>
<dbReference type="DisProt" id="DP02809"/>
<dbReference type="FunFam" id="1.10.287.110:FF:000109">
    <property type="entry name" value="J-type co-chaperone JAC1, mitochondrial"/>
    <property type="match status" value="1"/>
</dbReference>
<dbReference type="Gene3D" id="1.10.287.110">
    <property type="entry name" value="DnaJ domain"/>
    <property type="match status" value="1"/>
</dbReference>
<dbReference type="Gene3D" id="1.20.1280.20">
    <property type="entry name" value="HscB, C-terminal domain"/>
    <property type="match status" value="1"/>
</dbReference>
<dbReference type="InterPro" id="IPR001623">
    <property type="entry name" value="DnaJ_domain"/>
</dbReference>
<dbReference type="InterPro" id="IPR004640">
    <property type="entry name" value="HscB"/>
</dbReference>
<dbReference type="InterPro" id="IPR036386">
    <property type="entry name" value="HscB_C_sf"/>
</dbReference>
<dbReference type="InterPro" id="IPR009073">
    <property type="entry name" value="HscB_oligo_C"/>
</dbReference>
<dbReference type="InterPro" id="IPR036869">
    <property type="entry name" value="J_dom_sf"/>
</dbReference>
<dbReference type="NCBIfam" id="TIGR00714">
    <property type="entry name" value="hscB"/>
    <property type="match status" value="1"/>
</dbReference>
<dbReference type="PANTHER" id="PTHR14021">
    <property type="entry name" value="IRON-SULFUR CLUSTER CO-CHAPERONE PROTEIN HSCB"/>
    <property type="match status" value="1"/>
</dbReference>
<dbReference type="PANTHER" id="PTHR14021:SF15">
    <property type="entry name" value="IRON-SULFUR CLUSTER CO-CHAPERONE PROTEIN HSCB"/>
    <property type="match status" value="1"/>
</dbReference>
<dbReference type="Pfam" id="PF00226">
    <property type="entry name" value="DnaJ"/>
    <property type="match status" value="1"/>
</dbReference>
<dbReference type="Pfam" id="PF07743">
    <property type="entry name" value="HSCB_C"/>
    <property type="match status" value="1"/>
</dbReference>
<dbReference type="SMART" id="SM00271">
    <property type="entry name" value="DnaJ"/>
    <property type="match status" value="1"/>
</dbReference>
<dbReference type="SUPFAM" id="SSF46565">
    <property type="entry name" value="Chaperone J-domain"/>
    <property type="match status" value="1"/>
</dbReference>
<dbReference type="SUPFAM" id="SSF47144">
    <property type="entry name" value="HSC20 (HSCB), C-terminal oligomerisation domain"/>
    <property type="match status" value="1"/>
</dbReference>
<dbReference type="PROSITE" id="PS50076">
    <property type="entry name" value="DNAJ_2"/>
    <property type="match status" value="1"/>
</dbReference>
<name>JAC1_YEAST</name>
<protein>
    <recommendedName>
        <fullName evidence="17">J-type co-chaperone JAC1, mitochondrial</fullName>
    </recommendedName>
    <alternativeName>
        <fullName evidence="17">J-type accessory chaperone 1</fullName>
    </alternativeName>
</protein>
<evidence type="ECO:0000255" key="1">
    <source>
        <dbReference type="PROSITE-ProRule" id="PRU00286"/>
    </source>
</evidence>
<evidence type="ECO:0000269" key="2">
    <source>
    </source>
</evidence>
<evidence type="ECO:0000269" key="3">
    <source>
    </source>
</evidence>
<evidence type="ECO:0000269" key="4">
    <source>
    </source>
</evidence>
<evidence type="ECO:0000269" key="5">
    <source>
    </source>
</evidence>
<evidence type="ECO:0000269" key="6">
    <source>
    </source>
</evidence>
<evidence type="ECO:0000269" key="7">
    <source>
    </source>
</evidence>
<evidence type="ECO:0000269" key="8">
    <source>
    </source>
</evidence>
<evidence type="ECO:0000269" key="9">
    <source>
    </source>
</evidence>
<evidence type="ECO:0000269" key="10">
    <source>
    </source>
</evidence>
<evidence type="ECO:0000269" key="11">
    <source>
    </source>
</evidence>
<evidence type="ECO:0000269" key="12">
    <source>
    </source>
</evidence>
<evidence type="ECO:0000269" key="13">
    <source>
    </source>
</evidence>
<evidence type="ECO:0000269" key="14">
    <source>
    </source>
</evidence>
<evidence type="ECO:0000269" key="15">
    <source>
    </source>
</evidence>
<evidence type="ECO:0000303" key="16">
    <source>
    </source>
</evidence>
<evidence type="ECO:0000305" key="17"/>
<evidence type="ECO:0000312" key="18">
    <source>
        <dbReference type="SGD" id="S000002986"/>
    </source>
</evidence>
<evidence type="ECO:0007829" key="19">
    <source>
        <dbReference type="PDB" id="3UO3"/>
    </source>
</evidence>
<feature type="transit peptide" description="Mitochondrion" evidence="2">
    <location>
        <begin position="1"/>
        <end position="10"/>
    </location>
</feature>
<feature type="chain" id="PRO_0000071163" description="J-type co-chaperone JAC1, mitochondrial">
    <location>
        <begin position="11"/>
        <end position="184"/>
    </location>
</feature>
<feature type="domain" description="J" evidence="1">
    <location>
        <begin position="13"/>
        <end position="82"/>
    </location>
</feature>
<feature type="region of interest" description="Interaction with ISU1">
    <location>
        <begin position="71"/>
        <end position="184"/>
    </location>
</feature>
<feature type="short sequence motif" description="HSP70 binding" evidence="14">
    <location>
        <begin position="48"/>
        <end position="50"/>
    </location>
</feature>
<feature type="mutagenesis site" description="Decreases JAC1 ATPase activator activity; when associated with A-35; S-38 and L-41. Abolishes JAC1 ATPase activator activity; when associated with A-35; S-38; L-41 and A-48." evidence="14">
    <original>K</original>
    <variation>A</variation>
    <location>
        <position position="20"/>
    </location>
</feature>
<feature type="mutagenesis site" description="In JAC1-1; temperature sensitive; causes growth defect at high temperatures." evidence="15">
    <location>
        <position position="32"/>
    </location>
</feature>
<feature type="mutagenesis site" description="Decreases JAC1 ATPase activator activity; when associated with A-20; S-38 and L-41. Abolishes JAC1 ATPase activator activity; when associated with A-20; S-38; L-41 and A-48." evidence="14">
    <original>R</original>
    <variation>A</variation>
    <location>
        <position position="35"/>
    </location>
</feature>
<feature type="mutagenesis site" description="Decreases JAC1 ATPase activator activity; when associated with A-20; A-35 and L-41. Abolishes JAC1 ATPase activator activity; when associated with A-20; A-35; L-41 and A-48." evidence="14">
    <original>K</original>
    <variation>S</variation>
    <location>
        <position position="38"/>
    </location>
</feature>
<feature type="mutagenesis site" description="Decreases JAC1 ATPase activator activity; when associated with A-20; A-35 and S-38. Abolishes JAC1 ATPase activator activity; when associated with A-20; A-35; S-38 and A-48." evidence="14">
    <original>R</original>
    <variation>L</variation>
    <location>
        <position position="41"/>
    </location>
</feature>
<feature type="mutagenesis site" description="In JAC1-A3; temperature sensitive; causes growth defect at high temperatures." evidence="2">
    <original>HPD</original>
    <variation>AAA</variation>
    <location>
        <begin position="48"/>
        <end position="50"/>
    </location>
</feature>
<feature type="mutagenesis site" description="Decreases JAC1 ATPase activator activity. Decreases vegetative cell population growth. Sensitive to high temperature. Abolishes JAC1 ATPase activator activity; when associated with A-20; A-35; S-38 and L-41." evidence="14">
    <original>H</original>
    <variation>A</variation>
    <location>
        <position position="48"/>
    </location>
</feature>
<feature type="mutagenesis site" description="Decreases JAC1 ATPase activator activity. Decreases vegetative cell population growth. Sensitive to high temperature." evidence="14">
    <original>P</original>
    <variation>A</variation>
    <location>
        <position position="49"/>
    </location>
</feature>
<feature type="mutagenesis site" description="Decreases JAC1 ATPase activator activity. Decreases vegetative cell population growth. Sensitive to high temperature." evidence="14">
    <original>D</original>
    <variation>A</variation>
    <location>
        <position position="50"/>
    </location>
</feature>
<feature type="mutagenesis site" description="In JAC1(LKDDEQ); impairs interaction with ISU1, but does not affect stimulation of SSQ1 ATPase activity." evidence="12">
    <original>LLLKVLDIHDELSQ</original>
    <variation>ALLAVLAIHAALSA</variation>
    <location>
        <begin position="104"/>
        <end position="117"/>
    </location>
</feature>
<feature type="helix" evidence="19">
    <location>
        <begin position="15"/>
        <end position="17"/>
    </location>
</feature>
<feature type="turn" evidence="19">
    <location>
        <begin position="19"/>
        <end position="21"/>
    </location>
</feature>
<feature type="helix" evidence="19">
    <location>
        <begin position="33"/>
        <end position="45"/>
    </location>
</feature>
<feature type="helix" evidence="19">
    <location>
        <begin position="58"/>
        <end position="60"/>
    </location>
</feature>
<feature type="helix" evidence="19">
    <location>
        <begin position="62"/>
        <end position="70"/>
    </location>
</feature>
<feature type="helix" evidence="19">
    <location>
        <begin position="72"/>
        <end position="84"/>
    </location>
</feature>
<feature type="helix" evidence="19">
    <location>
        <begin position="91"/>
        <end position="99"/>
    </location>
</feature>
<feature type="helix" evidence="19">
    <location>
        <begin position="102"/>
        <end position="117"/>
    </location>
</feature>
<feature type="helix" evidence="19">
    <location>
        <begin position="121"/>
        <end position="147"/>
    </location>
</feature>
<feature type="helix" evidence="19">
    <location>
        <begin position="151"/>
        <end position="172"/>
    </location>
</feature>